<comment type="function">
    <text evidence="1">Binds the lower part of the 30S subunit head. Binds mRNA in the 70S ribosome, positioning it for translation.</text>
</comment>
<comment type="subunit">
    <text evidence="1">Part of the 30S ribosomal subunit. Forms a tight complex with proteins S10 and S14.</text>
</comment>
<comment type="similarity">
    <text evidence="1">Belongs to the universal ribosomal protein uS3 family.</text>
</comment>
<reference key="1">
    <citation type="submission" date="2008-07" db="EMBL/GenBank/DDBJ databases">
        <title>Complete sequence of Geobacter bemidjiensis BEM.</title>
        <authorList>
            <consortium name="US DOE Joint Genome Institute"/>
            <person name="Lucas S."/>
            <person name="Copeland A."/>
            <person name="Lapidus A."/>
            <person name="Glavina del Rio T."/>
            <person name="Dalin E."/>
            <person name="Tice H."/>
            <person name="Bruce D."/>
            <person name="Goodwin L."/>
            <person name="Pitluck S."/>
            <person name="Kiss H."/>
            <person name="Brettin T."/>
            <person name="Detter J.C."/>
            <person name="Han C."/>
            <person name="Kuske C.R."/>
            <person name="Schmutz J."/>
            <person name="Larimer F."/>
            <person name="Land M."/>
            <person name="Hauser L."/>
            <person name="Kyrpides N."/>
            <person name="Lykidis A."/>
            <person name="Lovley D."/>
            <person name="Richardson P."/>
        </authorList>
    </citation>
    <scope>NUCLEOTIDE SEQUENCE [LARGE SCALE GENOMIC DNA]</scope>
    <source>
        <strain>ATCC BAA-1014 / DSM 16622 / JCM 12645 / Bem</strain>
    </source>
</reference>
<evidence type="ECO:0000255" key="1">
    <source>
        <dbReference type="HAMAP-Rule" id="MF_01309"/>
    </source>
</evidence>
<evidence type="ECO:0000305" key="2"/>
<organism>
    <name type="scientific">Citrifermentans bemidjiense (strain ATCC BAA-1014 / DSM 16622 / JCM 12645 / Bem)</name>
    <name type="common">Geobacter bemidjiensis</name>
    <dbReference type="NCBI Taxonomy" id="404380"/>
    <lineage>
        <taxon>Bacteria</taxon>
        <taxon>Pseudomonadati</taxon>
        <taxon>Thermodesulfobacteriota</taxon>
        <taxon>Desulfuromonadia</taxon>
        <taxon>Geobacterales</taxon>
        <taxon>Geobacteraceae</taxon>
        <taxon>Citrifermentans</taxon>
    </lineage>
</organism>
<accession>B5EFQ6</accession>
<gene>
    <name evidence="1" type="primary">rpsC</name>
    <name type="ordered locus">Gbem_0939</name>
</gene>
<sequence length="211" mass="23898">MGQKVNPIGFRLGVIKTWDSKWYAEKDYAKLLHEDLKLRNFLKKRLYHSGVSKIEIERAAGKAKINIFTARPGLIIGKKGSEVETLKKELAKLTDKEVYLNIQEVRKPELDAQLVAENVAMQLERRIAFRRAMKKSVTSTLKFGAKGIRITCSGRLGGAEMSRTEWYREGRVPLHTLRADIDYGFAEAKTTYGIIGVKVLLFKGEVLSAKK</sequence>
<keyword id="KW-1185">Reference proteome</keyword>
<keyword id="KW-0687">Ribonucleoprotein</keyword>
<keyword id="KW-0689">Ribosomal protein</keyword>
<keyword id="KW-0694">RNA-binding</keyword>
<keyword id="KW-0699">rRNA-binding</keyword>
<feature type="chain" id="PRO_1000140974" description="Small ribosomal subunit protein uS3">
    <location>
        <begin position="1"/>
        <end position="211"/>
    </location>
</feature>
<feature type="domain" description="KH type-2" evidence="1">
    <location>
        <begin position="38"/>
        <end position="106"/>
    </location>
</feature>
<proteinExistence type="inferred from homology"/>
<name>RS3_CITBB</name>
<dbReference type="EMBL" id="CP001124">
    <property type="protein sequence ID" value="ACH37960.1"/>
    <property type="molecule type" value="Genomic_DNA"/>
</dbReference>
<dbReference type="RefSeq" id="WP_012529372.1">
    <property type="nucleotide sequence ID" value="NC_011146.1"/>
</dbReference>
<dbReference type="SMR" id="B5EFQ6"/>
<dbReference type="STRING" id="404380.Gbem_0939"/>
<dbReference type="KEGG" id="gbm:Gbem_0939"/>
<dbReference type="eggNOG" id="COG0092">
    <property type="taxonomic scope" value="Bacteria"/>
</dbReference>
<dbReference type="HOGENOM" id="CLU_058591_0_2_7"/>
<dbReference type="OrthoDB" id="9806396at2"/>
<dbReference type="Proteomes" id="UP000008825">
    <property type="component" value="Chromosome"/>
</dbReference>
<dbReference type="GO" id="GO:0022627">
    <property type="term" value="C:cytosolic small ribosomal subunit"/>
    <property type="evidence" value="ECO:0007669"/>
    <property type="project" value="TreeGrafter"/>
</dbReference>
<dbReference type="GO" id="GO:0003729">
    <property type="term" value="F:mRNA binding"/>
    <property type="evidence" value="ECO:0007669"/>
    <property type="project" value="UniProtKB-UniRule"/>
</dbReference>
<dbReference type="GO" id="GO:0019843">
    <property type="term" value="F:rRNA binding"/>
    <property type="evidence" value="ECO:0007669"/>
    <property type="project" value="UniProtKB-UniRule"/>
</dbReference>
<dbReference type="GO" id="GO:0003735">
    <property type="term" value="F:structural constituent of ribosome"/>
    <property type="evidence" value="ECO:0007669"/>
    <property type="project" value="InterPro"/>
</dbReference>
<dbReference type="GO" id="GO:0006412">
    <property type="term" value="P:translation"/>
    <property type="evidence" value="ECO:0007669"/>
    <property type="project" value="UniProtKB-UniRule"/>
</dbReference>
<dbReference type="CDD" id="cd02412">
    <property type="entry name" value="KH-II_30S_S3"/>
    <property type="match status" value="1"/>
</dbReference>
<dbReference type="FunFam" id="3.30.1140.32:FF:000009">
    <property type="entry name" value="30S ribosomal protein S3"/>
    <property type="match status" value="1"/>
</dbReference>
<dbReference type="FunFam" id="3.30.300.20:FF:000001">
    <property type="entry name" value="30S ribosomal protein S3"/>
    <property type="match status" value="1"/>
</dbReference>
<dbReference type="Gene3D" id="3.30.300.20">
    <property type="match status" value="1"/>
</dbReference>
<dbReference type="Gene3D" id="3.30.1140.32">
    <property type="entry name" value="Ribosomal protein S3, C-terminal domain"/>
    <property type="match status" value="1"/>
</dbReference>
<dbReference type="HAMAP" id="MF_01309_B">
    <property type="entry name" value="Ribosomal_uS3_B"/>
    <property type="match status" value="1"/>
</dbReference>
<dbReference type="InterPro" id="IPR004087">
    <property type="entry name" value="KH_dom"/>
</dbReference>
<dbReference type="InterPro" id="IPR015946">
    <property type="entry name" value="KH_dom-like_a/b"/>
</dbReference>
<dbReference type="InterPro" id="IPR004044">
    <property type="entry name" value="KH_dom_type_2"/>
</dbReference>
<dbReference type="InterPro" id="IPR009019">
    <property type="entry name" value="KH_sf_prok-type"/>
</dbReference>
<dbReference type="InterPro" id="IPR036419">
    <property type="entry name" value="Ribosomal_S3_C_sf"/>
</dbReference>
<dbReference type="InterPro" id="IPR005704">
    <property type="entry name" value="Ribosomal_uS3_bac-typ"/>
</dbReference>
<dbReference type="InterPro" id="IPR001351">
    <property type="entry name" value="Ribosomal_uS3_C"/>
</dbReference>
<dbReference type="InterPro" id="IPR018280">
    <property type="entry name" value="Ribosomal_uS3_CS"/>
</dbReference>
<dbReference type="NCBIfam" id="TIGR01009">
    <property type="entry name" value="rpsC_bact"/>
    <property type="match status" value="1"/>
</dbReference>
<dbReference type="PANTHER" id="PTHR11760">
    <property type="entry name" value="30S/40S RIBOSOMAL PROTEIN S3"/>
    <property type="match status" value="1"/>
</dbReference>
<dbReference type="PANTHER" id="PTHR11760:SF19">
    <property type="entry name" value="SMALL RIBOSOMAL SUBUNIT PROTEIN US3C"/>
    <property type="match status" value="1"/>
</dbReference>
<dbReference type="Pfam" id="PF07650">
    <property type="entry name" value="KH_2"/>
    <property type="match status" value="1"/>
</dbReference>
<dbReference type="Pfam" id="PF00189">
    <property type="entry name" value="Ribosomal_S3_C"/>
    <property type="match status" value="1"/>
</dbReference>
<dbReference type="SMART" id="SM00322">
    <property type="entry name" value="KH"/>
    <property type="match status" value="1"/>
</dbReference>
<dbReference type="SUPFAM" id="SSF54814">
    <property type="entry name" value="Prokaryotic type KH domain (KH-domain type II)"/>
    <property type="match status" value="1"/>
</dbReference>
<dbReference type="SUPFAM" id="SSF54821">
    <property type="entry name" value="Ribosomal protein S3 C-terminal domain"/>
    <property type="match status" value="1"/>
</dbReference>
<dbReference type="PROSITE" id="PS50823">
    <property type="entry name" value="KH_TYPE_2"/>
    <property type="match status" value="1"/>
</dbReference>
<dbReference type="PROSITE" id="PS00548">
    <property type="entry name" value="RIBOSOMAL_S3"/>
    <property type="match status" value="1"/>
</dbReference>
<protein>
    <recommendedName>
        <fullName evidence="1">Small ribosomal subunit protein uS3</fullName>
    </recommendedName>
    <alternativeName>
        <fullName evidence="2">30S ribosomal protein S3</fullName>
    </alternativeName>
</protein>